<feature type="initiator methionine" description="Removed" evidence="4">
    <location>
        <position position="1"/>
    </location>
</feature>
<feature type="chain" id="PRO_0000284440" description="ATP-dependent 6-phosphofructokinase, liver type">
    <location>
        <begin position="2"/>
        <end position="780"/>
    </location>
</feature>
<feature type="region of interest" description="N-terminal catalytic PFK domain 1">
    <location>
        <begin position="2"/>
        <end position="390"/>
    </location>
</feature>
<feature type="region of interest" description="Interdomain linker">
    <location>
        <begin position="391"/>
        <end position="400"/>
    </location>
</feature>
<feature type="region of interest" description="C-terminal regulatory PFK domain 2">
    <location>
        <begin position="401"/>
        <end position="780"/>
    </location>
</feature>
<feature type="active site" description="Proton acceptor" evidence="6">
    <location>
        <position position="166"/>
    </location>
</feature>
<feature type="binding site" evidence="6">
    <location>
        <position position="25"/>
    </location>
    <ligand>
        <name>ATP</name>
        <dbReference type="ChEBI" id="CHEBI:30616"/>
    </ligand>
</feature>
<feature type="binding site" evidence="6">
    <location>
        <begin position="88"/>
        <end position="89"/>
    </location>
    <ligand>
        <name>ATP</name>
        <dbReference type="ChEBI" id="CHEBI:30616"/>
    </ligand>
</feature>
<feature type="binding site" evidence="6">
    <location>
        <begin position="118"/>
        <end position="121"/>
    </location>
    <ligand>
        <name>ATP</name>
        <dbReference type="ChEBI" id="CHEBI:30616"/>
    </ligand>
</feature>
<feature type="binding site" evidence="6">
    <location>
        <position position="119"/>
    </location>
    <ligand>
        <name>Mg(2+)</name>
        <dbReference type="ChEBI" id="CHEBI:18420"/>
        <note>catalytic</note>
    </ligand>
</feature>
<feature type="binding site" description="in other chain" evidence="6">
    <location>
        <begin position="164"/>
        <end position="166"/>
    </location>
    <ligand>
        <name>substrate</name>
        <note>ligand shared between dimeric partners</note>
    </ligand>
</feature>
<feature type="binding site" evidence="6">
    <location>
        <position position="201"/>
    </location>
    <ligand>
        <name>substrate</name>
        <note>ligand shared between dimeric partners</note>
    </ligand>
</feature>
<feature type="binding site" description="in other chain" evidence="6">
    <location>
        <begin position="208"/>
        <end position="210"/>
    </location>
    <ligand>
        <name>substrate</name>
        <note>ligand shared between dimeric partners</note>
    </ligand>
</feature>
<feature type="binding site" description="in other chain" evidence="6">
    <location>
        <position position="264"/>
    </location>
    <ligand>
        <name>substrate</name>
        <note>ligand shared between dimeric partners</note>
    </ligand>
</feature>
<feature type="binding site" evidence="6">
    <location>
        <position position="292"/>
    </location>
    <ligand>
        <name>substrate</name>
        <note>ligand shared between dimeric partners</note>
    </ligand>
</feature>
<feature type="binding site" description="in other chain" evidence="6">
    <location>
        <begin position="298"/>
        <end position="301"/>
    </location>
    <ligand>
        <name>substrate</name>
        <note>ligand shared between dimeric partners</note>
    </ligand>
</feature>
<feature type="binding site" description="in other chain" evidence="6">
    <location>
        <position position="470"/>
    </location>
    <ligand>
        <name>beta-D-fructose 2,6-bisphosphate</name>
        <dbReference type="ChEBI" id="CHEBI:58579"/>
        <note>allosteric activator; ligand shared between dimeric partners</note>
    </ligand>
</feature>
<feature type="binding site" description="in other chain" evidence="6">
    <location>
        <begin position="527"/>
        <end position="531"/>
    </location>
    <ligand>
        <name>beta-D-fructose 2,6-bisphosphate</name>
        <dbReference type="ChEBI" id="CHEBI:58579"/>
        <note>allosteric activator; ligand shared between dimeric partners</note>
    </ligand>
</feature>
<feature type="binding site" evidence="6">
    <location>
        <position position="565"/>
    </location>
    <ligand>
        <name>beta-D-fructose 2,6-bisphosphate</name>
        <dbReference type="ChEBI" id="CHEBI:58579"/>
        <note>allosteric activator; ligand shared between dimeric partners</note>
    </ligand>
</feature>
<feature type="binding site" description="in other chain" evidence="6">
    <location>
        <begin position="572"/>
        <end position="574"/>
    </location>
    <ligand>
        <name>beta-D-fructose 2,6-bisphosphate</name>
        <dbReference type="ChEBI" id="CHEBI:58579"/>
        <note>allosteric activator; ligand shared between dimeric partners</note>
    </ligand>
</feature>
<feature type="binding site" description="in other chain" evidence="6">
    <location>
        <position position="628"/>
    </location>
    <ligand>
        <name>beta-D-fructose 2,6-bisphosphate</name>
        <dbReference type="ChEBI" id="CHEBI:58579"/>
        <note>allosteric activator; ligand shared between dimeric partners</note>
    </ligand>
</feature>
<feature type="binding site" evidence="6">
    <location>
        <position position="654"/>
    </location>
    <ligand>
        <name>beta-D-fructose 2,6-bisphosphate</name>
        <dbReference type="ChEBI" id="CHEBI:58579"/>
        <note>allosteric activator; ligand shared between dimeric partners</note>
    </ligand>
</feature>
<feature type="binding site" description="in other chain" evidence="6">
    <location>
        <begin position="660"/>
        <end position="663"/>
    </location>
    <ligand>
        <name>beta-D-fructose 2,6-bisphosphate</name>
        <dbReference type="ChEBI" id="CHEBI:58579"/>
        <note>allosteric activator; ligand shared between dimeric partners</note>
    </ligand>
</feature>
<feature type="binding site" description="in other chain" evidence="6">
    <location>
        <position position="734"/>
    </location>
    <ligand>
        <name>beta-D-fructose 2,6-bisphosphate</name>
        <dbReference type="ChEBI" id="CHEBI:58579"/>
        <note>allosteric activator; ligand shared between dimeric partners</note>
    </ligand>
</feature>
<feature type="modified residue" description="N-acetylalanine" evidence="4">
    <location>
        <position position="2"/>
    </location>
</feature>
<feature type="modified residue" description="Phosphoserine" evidence="5">
    <location>
        <position position="377"/>
    </location>
</feature>
<feature type="modified residue" description="Phosphotyrosine" evidence="3">
    <location>
        <position position="640"/>
    </location>
</feature>
<feature type="modified residue" description="Phosphoserine" evidence="2">
    <location>
        <position position="775"/>
    </location>
</feature>
<feature type="glycosylation site" description="O-linked (GlcNAc) serine" evidence="1">
    <location>
        <position position="529"/>
    </location>
</feature>
<organism>
    <name type="scientific">Bos taurus</name>
    <name type="common">Bovine</name>
    <dbReference type="NCBI Taxonomy" id="9913"/>
    <lineage>
        <taxon>Eukaryota</taxon>
        <taxon>Metazoa</taxon>
        <taxon>Chordata</taxon>
        <taxon>Craniata</taxon>
        <taxon>Vertebrata</taxon>
        <taxon>Euteleostomi</taxon>
        <taxon>Mammalia</taxon>
        <taxon>Eutheria</taxon>
        <taxon>Laurasiatheria</taxon>
        <taxon>Artiodactyla</taxon>
        <taxon>Ruminantia</taxon>
        <taxon>Pecora</taxon>
        <taxon>Bovidae</taxon>
        <taxon>Bovinae</taxon>
        <taxon>Bos</taxon>
    </lineage>
</organism>
<evidence type="ECO:0000250" key="1"/>
<evidence type="ECO:0000250" key="2">
    <source>
        <dbReference type="UniProtKB" id="P00511"/>
    </source>
</evidence>
<evidence type="ECO:0000250" key="3">
    <source>
        <dbReference type="UniProtKB" id="P12382"/>
    </source>
</evidence>
<evidence type="ECO:0000250" key="4">
    <source>
        <dbReference type="UniProtKB" id="P17858"/>
    </source>
</evidence>
<evidence type="ECO:0000250" key="5">
    <source>
        <dbReference type="UniProtKB" id="P47857"/>
    </source>
</evidence>
<evidence type="ECO:0000255" key="6">
    <source>
        <dbReference type="HAMAP-Rule" id="MF_03184"/>
    </source>
</evidence>
<evidence type="ECO:0000305" key="7"/>
<comment type="function">
    <text evidence="3 6">Catalyzes the phosphorylation of D-fructose 6-phosphate to fructose 1,6-bisphosphate by ATP, the first committing step of glycolysis (By similarity). Negatively regulates the phagocyte oxidative burst in response to bacterial infection by controlling cellular NADPH biosynthesis and NADPH oxidase-derived reactive oxygen species. Upon macrophage activation, drives the metabolic switch toward glycolysis, thus preventing glucose turnover that produces NADPH via pentose phosphate pathway (By similarity).</text>
</comment>
<comment type="catalytic activity">
    <reaction evidence="6">
        <text>beta-D-fructose 6-phosphate + ATP = beta-D-fructose 1,6-bisphosphate + ADP + H(+)</text>
        <dbReference type="Rhea" id="RHEA:16109"/>
        <dbReference type="ChEBI" id="CHEBI:15378"/>
        <dbReference type="ChEBI" id="CHEBI:30616"/>
        <dbReference type="ChEBI" id="CHEBI:32966"/>
        <dbReference type="ChEBI" id="CHEBI:57634"/>
        <dbReference type="ChEBI" id="CHEBI:456216"/>
        <dbReference type="EC" id="2.7.1.11"/>
    </reaction>
</comment>
<comment type="cofactor">
    <cofactor evidence="6">
        <name>Mg(2+)</name>
        <dbReference type="ChEBI" id="CHEBI:18420"/>
    </cofactor>
</comment>
<comment type="activity regulation">
    <text evidence="6">Allosterically activated by ADP, AMP, or fructose 2,6-bisphosphate, and allosterically inhibited by ATP or citrate. GlcNAcylation by OGT overcomes allosteric regulation (By similarity).</text>
</comment>
<comment type="pathway">
    <text evidence="6">Carbohydrate degradation; glycolysis; D-glyceraldehyde 3-phosphate and glycerone phosphate from D-glucose: step 3/4.</text>
</comment>
<comment type="subunit">
    <text evidence="6 7">Homo- and heterotetramers (By similarity). Phosphofructokinase (PFK) enzyme functions as a tetramer composed of different combinations of 3 types of subunits, called PFKM (M), PFKL (L) and PFKP (P). The composition of the PFK tetramer differs according to the tissue type it is present in. The kinetic and regulatory properties of the tetrameric enzyme are dependent on the subunit composition, hence can vary across tissues (Probable).</text>
</comment>
<comment type="subcellular location">
    <subcellularLocation>
        <location evidence="6">Cytoplasm</location>
    </subcellularLocation>
</comment>
<comment type="PTM">
    <text evidence="1">GlcNAcylation at Ser-529 by OGT decreases enzyme activity, leading to redirect glucose flux through the oxidative pentose phosphate pathway. Glycosylation is stimulated by both hypoxia and glucose deprivation (By similarity).</text>
</comment>
<comment type="similarity">
    <text evidence="6">Belongs to the phosphofructokinase type A (PFKA) family. ATP-dependent PFK group I subfamily. Eukaryotic two domain clade 'E' sub-subfamily.</text>
</comment>
<name>PFKAL_BOVIN</name>
<sequence length="780" mass="85292">MASVDLEKLRTTGAGKAIGVLTSGGDAQGMNAAVRAVTRMGIYVGAKVFLIYEGYEGLVEGGENIKQANWLSVSNIIQLGGTVIGSARCKAFTTREGRRAAAYNLVQRGITNLCVIGGDGSLTGANIFRSEWGSLLEELVSEGKISEGTAQTYSHLNIAGLVGSIDNDFCGTDMTIGTDSALHRIMEVIDAITTTAQSHQRTFVLEVMGRHCGYLALVSALASGADWLFIPEAPPEDGWENFMCERLGETRSRGSRLNIIIIAEGAIDRNGKPISSRYVKDLVVQRLGFDTRVTVLGHVQRGGTPSAFDRILSSKMGMEAVMALLEATPDTPACVVSLSGNQSVRLPLMECVQMTKEVQKAMDEKRFDEAIQLRGGSFENNWNIYKLLSHQKISKEKTNFSLAILNVGAPAAGMNAAVRSAVRSGISQGHTVYVVHDGFEGLAKNQVQEVSWHDVAGWLGRGGSMLGTKRTLPKGFMEKIVENIRLHNIHALLVIGGFEAYEGVLQLVEARGRYEELCIVMCVIPATISNNVPGTDFSLGSDTAVNAAMESCDRIKQSASGTKRRVFIVETMGGYCGYLATVTGIAVGADAAYVFEDPFNIQDLKANVEHMTEKMKTEIQRGLVLRNEKCHEHYTTEFLYNLYSSEGKGVFDCRTNVLGHLQQGGAPTPFDRNYGTKLGVKAIIWMSEKLRAVYRNGRVFANASDSACVIGLQKKVVAFSPVTELKKDTDFEHRMPREQWWLNLRLMLKMLAHYRISMADYVSGELEHVTRRTLSIETGF</sequence>
<gene>
    <name type="primary">PFKL</name>
</gene>
<accession>A1A4J1</accession>
<proteinExistence type="evidence at transcript level"/>
<reference key="1">
    <citation type="submission" date="2006-10" db="EMBL/GenBank/DDBJ databases">
        <authorList>
            <consortium name="NIH - Mammalian Gene Collection (MGC) project"/>
        </authorList>
    </citation>
    <scope>NUCLEOTIDE SEQUENCE [LARGE SCALE MRNA]</scope>
    <source>
        <strain>Hereford</strain>
        <tissue>Placenta</tissue>
    </source>
</reference>
<protein>
    <recommendedName>
        <fullName evidence="6">ATP-dependent 6-phosphofructokinase, liver type</fullName>
        <shortName evidence="6">ATP-PFK</shortName>
        <shortName>PFK-L</shortName>
        <ecNumber evidence="6">2.7.1.11</ecNumber>
    </recommendedName>
    <alternativeName>
        <fullName>6-phosphofructokinase type B</fullName>
    </alternativeName>
    <alternativeName>
        <fullName>Phosphofructo-1-kinase isozyme B</fullName>
        <shortName>PFK-B</shortName>
    </alternativeName>
    <alternativeName>
        <fullName evidence="6">Phosphohexokinase</fullName>
    </alternativeName>
</protein>
<dbReference type="EC" id="2.7.1.11" evidence="6"/>
<dbReference type="EMBL" id="BC126578">
    <property type="protein sequence ID" value="AAI26579.1"/>
    <property type="molecule type" value="mRNA"/>
</dbReference>
<dbReference type="RefSeq" id="NP_001073713.1">
    <property type="nucleotide sequence ID" value="NM_001080244.2"/>
</dbReference>
<dbReference type="SMR" id="A1A4J1"/>
<dbReference type="CORUM" id="A1A4J1"/>
<dbReference type="FunCoup" id="A1A4J1">
    <property type="interactions" value="1606"/>
</dbReference>
<dbReference type="STRING" id="9913.ENSBTAP00000051545"/>
<dbReference type="GlyCosmos" id="A1A4J1">
    <property type="glycosylation" value="1 site, No reported glycans"/>
</dbReference>
<dbReference type="GlyGen" id="A1A4J1">
    <property type="glycosylation" value="1 site"/>
</dbReference>
<dbReference type="iPTMnet" id="A1A4J1"/>
<dbReference type="PaxDb" id="9913-ENSBTAP00000051545"/>
<dbReference type="PeptideAtlas" id="A1A4J1"/>
<dbReference type="Ensembl" id="ENSBTAT00000056305.4">
    <property type="protein sequence ID" value="ENSBTAP00000051545.2"/>
    <property type="gene ID" value="ENSBTAG00000010658.7"/>
</dbReference>
<dbReference type="GeneID" id="508683"/>
<dbReference type="KEGG" id="bta:508683"/>
<dbReference type="CTD" id="5211"/>
<dbReference type="VEuPathDB" id="HostDB:ENSBTAG00000010658"/>
<dbReference type="VGNC" id="VGNC:32773">
    <property type="gene designation" value="PFKL"/>
</dbReference>
<dbReference type="eggNOG" id="KOG2440">
    <property type="taxonomic scope" value="Eukaryota"/>
</dbReference>
<dbReference type="GeneTree" id="ENSGT00940000159292"/>
<dbReference type="HOGENOM" id="CLU_011053_0_0_1"/>
<dbReference type="InParanoid" id="A1A4J1"/>
<dbReference type="OMA" id="LMECVDM"/>
<dbReference type="OrthoDB" id="537915at2759"/>
<dbReference type="TreeFam" id="TF300411"/>
<dbReference type="Reactome" id="R-BTA-6798695">
    <property type="pathway name" value="Neutrophil degranulation"/>
</dbReference>
<dbReference type="Reactome" id="R-BTA-70171">
    <property type="pathway name" value="Glycolysis"/>
</dbReference>
<dbReference type="UniPathway" id="UPA00109">
    <property type="reaction ID" value="UER00182"/>
</dbReference>
<dbReference type="Proteomes" id="UP000009136">
    <property type="component" value="Chromosome 1"/>
</dbReference>
<dbReference type="Bgee" id="ENSBTAG00000010658">
    <property type="expression patterns" value="Expressed in retina and 104 other cell types or tissues"/>
</dbReference>
<dbReference type="GO" id="GO:0005945">
    <property type="term" value="C:6-phosphofructokinase complex"/>
    <property type="evidence" value="ECO:0000318"/>
    <property type="project" value="GO_Central"/>
</dbReference>
<dbReference type="GO" id="GO:0016020">
    <property type="term" value="C:membrane"/>
    <property type="evidence" value="ECO:0000318"/>
    <property type="project" value="GO_Central"/>
</dbReference>
<dbReference type="GO" id="GO:0003872">
    <property type="term" value="F:6-phosphofructokinase activity"/>
    <property type="evidence" value="ECO:0000250"/>
    <property type="project" value="UniProtKB"/>
</dbReference>
<dbReference type="GO" id="GO:0005524">
    <property type="term" value="F:ATP binding"/>
    <property type="evidence" value="ECO:0007669"/>
    <property type="project" value="UniProtKB-KW"/>
</dbReference>
<dbReference type="GO" id="GO:0070061">
    <property type="term" value="F:fructose binding"/>
    <property type="evidence" value="ECO:0007669"/>
    <property type="project" value="Ensembl"/>
</dbReference>
<dbReference type="GO" id="GO:0070095">
    <property type="term" value="F:fructose-6-phosphate binding"/>
    <property type="evidence" value="ECO:0000318"/>
    <property type="project" value="GO_Central"/>
</dbReference>
<dbReference type="GO" id="GO:0042802">
    <property type="term" value="F:identical protein binding"/>
    <property type="evidence" value="ECO:0007669"/>
    <property type="project" value="Ensembl"/>
</dbReference>
<dbReference type="GO" id="GO:0019900">
    <property type="term" value="F:kinase binding"/>
    <property type="evidence" value="ECO:0007669"/>
    <property type="project" value="Ensembl"/>
</dbReference>
<dbReference type="GO" id="GO:0046872">
    <property type="term" value="F:metal ion binding"/>
    <property type="evidence" value="ECO:0007669"/>
    <property type="project" value="UniProtKB-KW"/>
</dbReference>
<dbReference type="GO" id="GO:0061621">
    <property type="term" value="P:canonical glycolysis"/>
    <property type="evidence" value="ECO:0000318"/>
    <property type="project" value="GO_Central"/>
</dbReference>
<dbReference type="GO" id="GO:0030388">
    <property type="term" value="P:fructose 1,6-bisphosphate metabolic process"/>
    <property type="evidence" value="ECO:0000250"/>
    <property type="project" value="UniProtKB"/>
</dbReference>
<dbReference type="GO" id="GO:0006002">
    <property type="term" value="P:fructose 6-phosphate metabolic process"/>
    <property type="evidence" value="ECO:0000318"/>
    <property type="project" value="GO_Central"/>
</dbReference>
<dbReference type="GO" id="GO:0006096">
    <property type="term" value="P:glycolytic process"/>
    <property type="evidence" value="ECO:0000250"/>
    <property type="project" value="UniProtKB"/>
</dbReference>
<dbReference type="GO" id="GO:0046676">
    <property type="term" value="P:negative regulation of insulin secretion"/>
    <property type="evidence" value="ECO:0007669"/>
    <property type="project" value="Ensembl"/>
</dbReference>
<dbReference type="GO" id="GO:0009749">
    <property type="term" value="P:response to glucose"/>
    <property type="evidence" value="ECO:0000250"/>
    <property type="project" value="UniProtKB"/>
</dbReference>
<dbReference type="CDD" id="cd00764">
    <property type="entry name" value="Eukaryotic_PFK"/>
    <property type="match status" value="1"/>
</dbReference>
<dbReference type="FunFam" id="3.40.50.460:FF:000001">
    <property type="entry name" value="ATP-dependent 6-phosphofructokinase"/>
    <property type="match status" value="1"/>
</dbReference>
<dbReference type="FunFam" id="3.40.50.460:FF:000003">
    <property type="entry name" value="ATP-dependent 6-phosphofructokinase"/>
    <property type="match status" value="1"/>
</dbReference>
<dbReference type="FunFam" id="3.40.50.450:FF:000043">
    <property type="entry name" value="ATP-dependent 6-phosphofructokinase, platelet type"/>
    <property type="match status" value="1"/>
</dbReference>
<dbReference type="FunFam" id="3.40.50.450:FF:000064">
    <property type="entry name" value="Phosphofructokinase, platelet b"/>
    <property type="match status" value="1"/>
</dbReference>
<dbReference type="Gene3D" id="3.40.50.450">
    <property type="match status" value="2"/>
</dbReference>
<dbReference type="Gene3D" id="3.40.50.460">
    <property type="entry name" value="Phosphofructokinase domain"/>
    <property type="match status" value="2"/>
</dbReference>
<dbReference type="HAMAP" id="MF_03184">
    <property type="entry name" value="Phosphofructokinase_I_E"/>
    <property type="match status" value="1"/>
</dbReference>
<dbReference type="InterPro" id="IPR009161">
    <property type="entry name" value="6-Pfructokinase_euk"/>
</dbReference>
<dbReference type="InterPro" id="IPR022953">
    <property type="entry name" value="ATP_PFK"/>
</dbReference>
<dbReference type="InterPro" id="IPR041914">
    <property type="entry name" value="PFK_vert-type"/>
</dbReference>
<dbReference type="InterPro" id="IPR015912">
    <property type="entry name" value="Phosphofructokinase_CS"/>
</dbReference>
<dbReference type="InterPro" id="IPR000023">
    <property type="entry name" value="Phosphofructokinase_dom"/>
</dbReference>
<dbReference type="InterPro" id="IPR035966">
    <property type="entry name" value="PKF_sf"/>
</dbReference>
<dbReference type="NCBIfam" id="TIGR02478">
    <property type="entry name" value="6PF1K_euk"/>
    <property type="match status" value="1"/>
</dbReference>
<dbReference type="PANTHER" id="PTHR13697:SF14">
    <property type="entry name" value="ATP-DEPENDENT 6-PHOSPHOFRUCTOKINASE, LIVER TYPE"/>
    <property type="match status" value="1"/>
</dbReference>
<dbReference type="PANTHER" id="PTHR13697">
    <property type="entry name" value="PHOSPHOFRUCTOKINASE"/>
    <property type="match status" value="1"/>
</dbReference>
<dbReference type="Pfam" id="PF00365">
    <property type="entry name" value="PFK"/>
    <property type="match status" value="2"/>
</dbReference>
<dbReference type="PIRSF" id="PIRSF000533">
    <property type="entry name" value="ATP_PFK_euk"/>
    <property type="match status" value="1"/>
</dbReference>
<dbReference type="PRINTS" id="PR00476">
    <property type="entry name" value="PHFRCTKINASE"/>
</dbReference>
<dbReference type="SUPFAM" id="SSF53784">
    <property type="entry name" value="Phosphofructokinase"/>
    <property type="match status" value="2"/>
</dbReference>
<dbReference type="PROSITE" id="PS00433">
    <property type="entry name" value="PHOSPHOFRUCTOKINASE"/>
    <property type="match status" value="2"/>
</dbReference>
<keyword id="KW-0007">Acetylation</keyword>
<keyword id="KW-0021">Allosteric enzyme</keyword>
<keyword id="KW-0067">ATP-binding</keyword>
<keyword id="KW-0963">Cytoplasm</keyword>
<keyword id="KW-0324">Glycolysis</keyword>
<keyword id="KW-0325">Glycoprotein</keyword>
<keyword id="KW-0418">Kinase</keyword>
<keyword id="KW-0460">Magnesium</keyword>
<keyword id="KW-0479">Metal-binding</keyword>
<keyword id="KW-0547">Nucleotide-binding</keyword>
<keyword id="KW-0597">Phosphoprotein</keyword>
<keyword id="KW-1185">Reference proteome</keyword>
<keyword id="KW-0808">Transferase</keyword>